<organism>
    <name type="scientific">Xanthomonas euvesicatoria pv. vesicatoria (strain 85-10)</name>
    <name type="common">Xanthomonas campestris pv. vesicatoria</name>
    <dbReference type="NCBI Taxonomy" id="316273"/>
    <lineage>
        <taxon>Bacteria</taxon>
        <taxon>Pseudomonadati</taxon>
        <taxon>Pseudomonadota</taxon>
        <taxon>Gammaproteobacteria</taxon>
        <taxon>Lysobacterales</taxon>
        <taxon>Lysobacteraceae</taxon>
        <taxon>Xanthomonas</taxon>
    </lineage>
</organism>
<evidence type="ECO:0000255" key="1">
    <source>
        <dbReference type="HAMAP-Rule" id="MF_00147"/>
    </source>
</evidence>
<keyword id="KW-0963">Cytoplasm</keyword>
<keyword id="KW-0312">Gluconeogenesis</keyword>
<keyword id="KW-0324">Glycolysis</keyword>
<keyword id="KW-0413">Isomerase</keyword>
<gene>
    <name evidence="1" type="primary">tpiA</name>
    <name type="ordered locus">XCV2855</name>
</gene>
<reference key="1">
    <citation type="journal article" date="2005" name="J. Bacteriol.">
        <title>Insights into genome plasticity and pathogenicity of the plant pathogenic Bacterium Xanthomonas campestris pv. vesicatoria revealed by the complete genome sequence.</title>
        <authorList>
            <person name="Thieme F."/>
            <person name="Koebnik R."/>
            <person name="Bekel T."/>
            <person name="Berger C."/>
            <person name="Boch J."/>
            <person name="Buettner D."/>
            <person name="Caldana C."/>
            <person name="Gaigalat L."/>
            <person name="Goesmann A."/>
            <person name="Kay S."/>
            <person name="Kirchner O."/>
            <person name="Lanz C."/>
            <person name="Linke B."/>
            <person name="McHardy A.C."/>
            <person name="Meyer F."/>
            <person name="Mittenhuber G."/>
            <person name="Nies D.H."/>
            <person name="Niesbach-Kloesgen U."/>
            <person name="Patschkowski T."/>
            <person name="Rueckert C."/>
            <person name="Rupp O."/>
            <person name="Schneiker S."/>
            <person name="Schuster S.C."/>
            <person name="Vorhoelter F.J."/>
            <person name="Weber E."/>
            <person name="Puehler A."/>
            <person name="Bonas U."/>
            <person name="Bartels D."/>
            <person name="Kaiser O."/>
        </authorList>
    </citation>
    <scope>NUCLEOTIDE SEQUENCE [LARGE SCALE GENOMIC DNA]</scope>
    <source>
        <strain>85-10</strain>
    </source>
</reference>
<comment type="function">
    <text evidence="1">Involved in the gluconeogenesis. Catalyzes stereospecifically the conversion of dihydroxyacetone phosphate (DHAP) to D-glyceraldehyde-3-phosphate (G3P).</text>
</comment>
<comment type="catalytic activity">
    <reaction evidence="1">
        <text>D-glyceraldehyde 3-phosphate = dihydroxyacetone phosphate</text>
        <dbReference type="Rhea" id="RHEA:18585"/>
        <dbReference type="ChEBI" id="CHEBI:57642"/>
        <dbReference type="ChEBI" id="CHEBI:59776"/>
        <dbReference type="EC" id="5.3.1.1"/>
    </reaction>
</comment>
<comment type="pathway">
    <text evidence="1">Carbohydrate biosynthesis; gluconeogenesis.</text>
</comment>
<comment type="pathway">
    <text evidence="1">Carbohydrate degradation; glycolysis; D-glyceraldehyde 3-phosphate from glycerone phosphate: step 1/1.</text>
</comment>
<comment type="subunit">
    <text evidence="1">Homodimer.</text>
</comment>
<comment type="subcellular location">
    <subcellularLocation>
        <location evidence="1">Cytoplasm</location>
    </subcellularLocation>
</comment>
<comment type="similarity">
    <text evidence="1">Belongs to the triosephosphate isomerase family.</text>
</comment>
<accession>Q3BRM7</accession>
<sequence>MRRKIVAGNWKLHGSRAFATELVAKVAAHMPLEGVEVVILPPLPYLGDLIEDFEAHHLSFGAQDVSSNEKGAYTGEVSASMLVDVGAGYGLVGHSERRQYHHESSELVARKFAAAIHAGLIPVLCVGESLEQREAGQTEAILRAQLDPVLALVGSAGFAGAVLAYEPIWAIGTGRTATPEQAQAVHAFLRGEVAKADARIADSLPILYGGSVKPDNAGELFAQPDVDGGLVGGASLVAEDFLAIARAAAAC</sequence>
<proteinExistence type="inferred from homology"/>
<protein>
    <recommendedName>
        <fullName evidence="1">Triosephosphate isomerase</fullName>
        <shortName evidence="1">TIM</shortName>
        <shortName evidence="1">TPI</shortName>
        <ecNumber evidence="1">5.3.1.1</ecNumber>
    </recommendedName>
    <alternativeName>
        <fullName evidence="1">Triose-phosphate isomerase</fullName>
    </alternativeName>
</protein>
<name>TPIS_XANE5</name>
<dbReference type="EC" id="5.3.1.1" evidence="1"/>
<dbReference type="EMBL" id="AM039952">
    <property type="protein sequence ID" value="CAJ24534.1"/>
    <property type="molecule type" value="Genomic_DNA"/>
</dbReference>
<dbReference type="RefSeq" id="WP_008570966.1">
    <property type="nucleotide sequence ID" value="NZ_CP017190.1"/>
</dbReference>
<dbReference type="SMR" id="Q3BRM7"/>
<dbReference type="STRING" id="456327.BJD11_08590"/>
<dbReference type="GeneID" id="63991873"/>
<dbReference type="KEGG" id="xcv:XCV2855"/>
<dbReference type="eggNOG" id="COG0149">
    <property type="taxonomic scope" value="Bacteria"/>
</dbReference>
<dbReference type="HOGENOM" id="CLU_024251_2_1_6"/>
<dbReference type="UniPathway" id="UPA00109">
    <property type="reaction ID" value="UER00189"/>
</dbReference>
<dbReference type="UniPathway" id="UPA00138"/>
<dbReference type="Proteomes" id="UP000007069">
    <property type="component" value="Chromosome"/>
</dbReference>
<dbReference type="GO" id="GO:0005829">
    <property type="term" value="C:cytosol"/>
    <property type="evidence" value="ECO:0007669"/>
    <property type="project" value="TreeGrafter"/>
</dbReference>
<dbReference type="GO" id="GO:0004807">
    <property type="term" value="F:triose-phosphate isomerase activity"/>
    <property type="evidence" value="ECO:0007669"/>
    <property type="project" value="UniProtKB-UniRule"/>
</dbReference>
<dbReference type="GO" id="GO:0006094">
    <property type="term" value="P:gluconeogenesis"/>
    <property type="evidence" value="ECO:0007669"/>
    <property type="project" value="UniProtKB-UniRule"/>
</dbReference>
<dbReference type="GO" id="GO:0046166">
    <property type="term" value="P:glyceraldehyde-3-phosphate biosynthetic process"/>
    <property type="evidence" value="ECO:0007669"/>
    <property type="project" value="TreeGrafter"/>
</dbReference>
<dbReference type="GO" id="GO:0019563">
    <property type="term" value="P:glycerol catabolic process"/>
    <property type="evidence" value="ECO:0007669"/>
    <property type="project" value="TreeGrafter"/>
</dbReference>
<dbReference type="GO" id="GO:0006096">
    <property type="term" value="P:glycolytic process"/>
    <property type="evidence" value="ECO:0007669"/>
    <property type="project" value="UniProtKB-UniRule"/>
</dbReference>
<dbReference type="CDD" id="cd00311">
    <property type="entry name" value="TIM"/>
    <property type="match status" value="1"/>
</dbReference>
<dbReference type="FunFam" id="3.20.20.70:FF:000020">
    <property type="entry name" value="Triosephosphate isomerase"/>
    <property type="match status" value="1"/>
</dbReference>
<dbReference type="Gene3D" id="3.20.20.70">
    <property type="entry name" value="Aldolase class I"/>
    <property type="match status" value="1"/>
</dbReference>
<dbReference type="HAMAP" id="MF_00147_B">
    <property type="entry name" value="TIM_B"/>
    <property type="match status" value="1"/>
</dbReference>
<dbReference type="InterPro" id="IPR013785">
    <property type="entry name" value="Aldolase_TIM"/>
</dbReference>
<dbReference type="InterPro" id="IPR035990">
    <property type="entry name" value="TIM_sf"/>
</dbReference>
<dbReference type="InterPro" id="IPR022896">
    <property type="entry name" value="TrioseP_Isoase_bac/euk"/>
</dbReference>
<dbReference type="InterPro" id="IPR000652">
    <property type="entry name" value="Triosephosphate_isomerase"/>
</dbReference>
<dbReference type="InterPro" id="IPR020861">
    <property type="entry name" value="Triosephosphate_isomerase_AS"/>
</dbReference>
<dbReference type="NCBIfam" id="TIGR00419">
    <property type="entry name" value="tim"/>
    <property type="match status" value="1"/>
</dbReference>
<dbReference type="PANTHER" id="PTHR21139">
    <property type="entry name" value="TRIOSEPHOSPHATE ISOMERASE"/>
    <property type="match status" value="1"/>
</dbReference>
<dbReference type="PANTHER" id="PTHR21139:SF42">
    <property type="entry name" value="TRIOSEPHOSPHATE ISOMERASE"/>
    <property type="match status" value="1"/>
</dbReference>
<dbReference type="Pfam" id="PF00121">
    <property type="entry name" value="TIM"/>
    <property type="match status" value="1"/>
</dbReference>
<dbReference type="SUPFAM" id="SSF51351">
    <property type="entry name" value="Triosephosphate isomerase (TIM)"/>
    <property type="match status" value="1"/>
</dbReference>
<dbReference type="PROSITE" id="PS00171">
    <property type="entry name" value="TIM_1"/>
    <property type="match status" value="1"/>
</dbReference>
<dbReference type="PROSITE" id="PS51440">
    <property type="entry name" value="TIM_2"/>
    <property type="match status" value="1"/>
</dbReference>
<feature type="chain" id="PRO_0000307597" description="Triosephosphate isomerase">
    <location>
        <begin position="1"/>
        <end position="251"/>
    </location>
</feature>
<feature type="active site" description="Electrophile" evidence="1">
    <location>
        <position position="94"/>
    </location>
</feature>
<feature type="active site" description="Proton acceptor" evidence="1">
    <location>
        <position position="166"/>
    </location>
</feature>
<feature type="binding site" evidence="1">
    <location>
        <begin position="9"/>
        <end position="11"/>
    </location>
    <ligand>
        <name>substrate</name>
    </ligand>
</feature>
<feature type="binding site" evidence="1">
    <location>
        <position position="172"/>
    </location>
    <ligand>
        <name>substrate</name>
    </ligand>
</feature>
<feature type="binding site" evidence="1">
    <location>
        <position position="211"/>
    </location>
    <ligand>
        <name>substrate</name>
    </ligand>
</feature>
<feature type="binding site" evidence="1">
    <location>
        <begin position="232"/>
        <end position="233"/>
    </location>
    <ligand>
        <name>substrate</name>
    </ligand>
</feature>